<accession>Q8VDW0</accession>
<accession>Q3UJV4</accession>
<accession>Q8C2C2</accession>
<comment type="function">
    <text evidence="1">Helicase that plays an essential role in mRNA export and is involved in multiple steps in RNA metabolism including alternative splicing. Regulates nuclear mRNA export to the cytoplasm through association with ECD. Also involved in spliceosomal uridine-rich small nuclear RNA (U snRNA) export by stimulating the RNA binding of adapter PHAX. Plays a role in the negative regulation of type I IFN production by increasing the nuclear retention of antiviral transcripts and thus reducing their protein expression. Independently of the interferon pathway, plays an antiviral role against alphaviruses by binding to a 5' conserved sequence element in the viral genomic RNA.</text>
</comment>
<comment type="catalytic activity">
    <reaction>
        <text>ATP + H2O = ADP + phosphate + H(+)</text>
        <dbReference type="Rhea" id="RHEA:13065"/>
        <dbReference type="ChEBI" id="CHEBI:15377"/>
        <dbReference type="ChEBI" id="CHEBI:15378"/>
        <dbReference type="ChEBI" id="CHEBI:30616"/>
        <dbReference type="ChEBI" id="CHEBI:43474"/>
        <dbReference type="ChEBI" id="CHEBI:456216"/>
        <dbReference type="EC" id="3.6.4.13"/>
    </reaction>
</comment>
<comment type="subunit">
    <text evidence="1">Binds ALYREF/THOC4 and DDX39B/BAT1. Interacts with the apo-AREX complex component SARNP. Interacts with MX1. Interacts with MCM3AP isoform GANP. Interacts with ECD. Interacts with PHAX; this interaction stimulates PHAX RNA binding activity.</text>
</comment>
<comment type="subcellular location">
    <subcellularLocation>
        <location evidence="1">Nucleus</location>
    </subcellularLocation>
    <subcellularLocation>
        <location evidence="1">Cytoplasm</location>
    </subcellularLocation>
    <text evidence="1">Can translocate to the cytoplasm in the presence of MX1. Accumulates in the cytoplasm upon infection with chikungunya virus.</text>
</comment>
<comment type="alternative products">
    <event type="alternative splicing"/>
    <isoform>
        <id>Q8VDW0-1</id>
        <name>1</name>
        <sequence type="displayed"/>
    </isoform>
    <isoform>
        <id>Q8VDW0-2</id>
        <name>2</name>
        <sequence type="described" ref="VSP_013064"/>
    </isoform>
</comment>
<comment type="PTM">
    <text evidence="1">SUMOylated by RANBP2; SUMOylation modification affects its ability to bind RNA.</text>
</comment>
<comment type="similarity">
    <text evidence="6">Belongs to the DEAD box helicase family. DECD subfamily.</text>
</comment>
<protein>
    <recommendedName>
        <fullName>ATP-dependent RNA helicase DDX39A</fullName>
        <ecNumber>3.6.4.13</ecNumber>
    </recommendedName>
    <alternativeName>
        <fullName>DEAD box protein 39</fullName>
    </alternativeName>
</protein>
<evidence type="ECO:0000250" key="1">
    <source>
        <dbReference type="UniProtKB" id="O00148"/>
    </source>
</evidence>
<evidence type="ECO:0000255" key="2">
    <source>
        <dbReference type="PROSITE-ProRule" id="PRU00541"/>
    </source>
</evidence>
<evidence type="ECO:0000255" key="3">
    <source>
        <dbReference type="PROSITE-ProRule" id="PRU00542"/>
    </source>
</evidence>
<evidence type="ECO:0000256" key="4">
    <source>
        <dbReference type="SAM" id="MobiDB-lite"/>
    </source>
</evidence>
<evidence type="ECO:0000303" key="5">
    <source>
    </source>
</evidence>
<evidence type="ECO:0000305" key="6"/>
<evidence type="ECO:0000312" key="7">
    <source>
        <dbReference type="MGI" id="MGI:1915528"/>
    </source>
</evidence>
<keyword id="KW-0007">Acetylation</keyword>
<keyword id="KW-0025">Alternative splicing</keyword>
<keyword id="KW-0067">ATP-binding</keyword>
<keyword id="KW-0963">Cytoplasm</keyword>
<keyword id="KW-0347">Helicase</keyword>
<keyword id="KW-0378">Hydrolase</keyword>
<keyword id="KW-1017">Isopeptide bond</keyword>
<keyword id="KW-0507">mRNA processing</keyword>
<keyword id="KW-0508">mRNA splicing</keyword>
<keyword id="KW-0547">Nucleotide-binding</keyword>
<keyword id="KW-0539">Nucleus</keyword>
<keyword id="KW-0597">Phosphoprotein</keyword>
<keyword id="KW-1185">Reference proteome</keyword>
<keyword id="KW-0832">Ubl conjugation</keyword>
<gene>
    <name evidence="7" type="primary">Ddx39a</name>
    <name evidence="7" type="synonym">Ddx39</name>
</gene>
<sequence length="427" mass="49067">MAEQDVENELLDYDEDEEPQAPQESTPAPPKKDVKGSYVSIHSSGFRDFLLKPELLRAIVDCGFEHPSEVQHECIPQAILGMDVLCQAKSGMGKTAVFVLATLQQIEPVNGQVSVLVMCHTRELAFQISKEYERFSKYMPSVKVSVFFGGLSIKKDEDVLKKNCPHVVVGTPGRILALVRSRSLNLRNVKHFVLDECDKMLEQLDMRRDVQEIFRLTPHEKQCMMFSATLSKEIRPVCRKFMQDPMEVFVDDETKLTLHGLQQYYVKLKDSEKNRKLFDLLDVLEFNQVVIFVKSVQRCMALAQLLVEQNFPAIAIHRGMAQEERLSRYQQFKDFQRRILVATNLFGRGMDIERVNIVFNYDMPEDSDTYLHRVARAGRFGTKGLAVTFVSDENDAKILNDVQDRFEVNVAELPEEIDISTYIEQSR</sequence>
<organism>
    <name type="scientific">Mus musculus</name>
    <name type="common">Mouse</name>
    <dbReference type="NCBI Taxonomy" id="10090"/>
    <lineage>
        <taxon>Eukaryota</taxon>
        <taxon>Metazoa</taxon>
        <taxon>Chordata</taxon>
        <taxon>Craniata</taxon>
        <taxon>Vertebrata</taxon>
        <taxon>Euteleostomi</taxon>
        <taxon>Mammalia</taxon>
        <taxon>Eutheria</taxon>
        <taxon>Euarchontoglires</taxon>
        <taxon>Glires</taxon>
        <taxon>Rodentia</taxon>
        <taxon>Myomorpha</taxon>
        <taxon>Muroidea</taxon>
        <taxon>Muridae</taxon>
        <taxon>Murinae</taxon>
        <taxon>Mus</taxon>
        <taxon>Mus</taxon>
    </lineage>
</organism>
<proteinExistence type="evidence at protein level"/>
<reference key="1">
    <citation type="journal article" date="2005" name="Science">
        <title>The transcriptional landscape of the mammalian genome.</title>
        <authorList>
            <person name="Carninci P."/>
            <person name="Kasukawa T."/>
            <person name="Katayama S."/>
            <person name="Gough J."/>
            <person name="Frith M.C."/>
            <person name="Maeda N."/>
            <person name="Oyama R."/>
            <person name="Ravasi T."/>
            <person name="Lenhard B."/>
            <person name="Wells C."/>
            <person name="Kodzius R."/>
            <person name="Shimokawa K."/>
            <person name="Bajic V.B."/>
            <person name="Brenner S.E."/>
            <person name="Batalov S."/>
            <person name="Forrest A.R."/>
            <person name="Zavolan M."/>
            <person name="Davis M.J."/>
            <person name="Wilming L.G."/>
            <person name="Aidinis V."/>
            <person name="Allen J.E."/>
            <person name="Ambesi-Impiombato A."/>
            <person name="Apweiler R."/>
            <person name="Aturaliya R.N."/>
            <person name="Bailey T.L."/>
            <person name="Bansal M."/>
            <person name="Baxter L."/>
            <person name="Beisel K.W."/>
            <person name="Bersano T."/>
            <person name="Bono H."/>
            <person name="Chalk A.M."/>
            <person name="Chiu K.P."/>
            <person name="Choudhary V."/>
            <person name="Christoffels A."/>
            <person name="Clutterbuck D.R."/>
            <person name="Crowe M.L."/>
            <person name="Dalla E."/>
            <person name="Dalrymple B.P."/>
            <person name="de Bono B."/>
            <person name="Della Gatta G."/>
            <person name="di Bernardo D."/>
            <person name="Down T."/>
            <person name="Engstrom P."/>
            <person name="Fagiolini M."/>
            <person name="Faulkner G."/>
            <person name="Fletcher C.F."/>
            <person name="Fukushima T."/>
            <person name="Furuno M."/>
            <person name="Futaki S."/>
            <person name="Gariboldi M."/>
            <person name="Georgii-Hemming P."/>
            <person name="Gingeras T.R."/>
            <person name="Gojobori T."/>
            <person name="Green R.E."/>
            <person name="Gustincich S."/>
            <person name="Harbers M."/>
            <person name="Hayashi Y."/>
            <person name="Hensch T.K."/>
            <person name="Hirokawa N."/>
            <person name="Hill D."/>
            <person name="Huminiecki L."/>
            <person name="Iacono M."/>
            <person name="Ikeo K."/>
            <person name="Iwama A."/>
            <person name="Ishikawa T."/>
            <person name="Jakt M."/>
            <person name="Kanapin A."/>
            <person name="Katoh M."/>
            <person name="Kawasawa Y."/>
            <person name="Kelso J."/>
            <person name="Kitamura H."/>
            <person name="Kitano H."/>
            <person name="Kollias G."/>
            <person name="Krishnan S.P."/>
            <person name="Kruger A."/>
            <person name="Kummerfeld S.K."/>
            <person name="Kurochkin I.V."/>
            <person name="Lareau L.F."/>
            <person name="Lazarevic D."/>
            <person name="Lipovich L."/>
            <person name="Liu J."/>
            <person name="Liuni S."/>
            <person name="McWilliam S."/>
            <person name="Madan Babu M."/>
            <person name="Madera M."/>
            <person name="Marchionni L."/>
            <person name="Matsuda H."/>
            <person name="Matsuzawa S."/>
            <person name="Miki H."/>
            <person name="Mignone F."/>
            <person name="Miyake S."/>
            <person name="Morris K."/>
            <person name="Mottagui-Tabar S."/>
            <person name="Mulder N."/>
            <person name="Nakano N."/>
            <person name="Nakauchi H."/>
            <person name="Ng P."/>
            <person name="Nilsson R."/>
            <person name="Nishiguchi S."/>
            <person name="Nishikawa S."/>
            <person name="Nori F."/>
            <person name="Ohara O."/>
            <person name="Okazaki Y."/>
            <person name="Orlando V."/>
            <person name="Pang K.C."/>
            <person name="Pavan W.J."/>
            <person name="Pavesi G."/>
            <person name="Pesole G."/>
            <person name="Petrovsky N."/>
            <person name="Piazza S."/>
            <person name="Reed J."/>
            <person name="Reid J.F."/>
            <person name="Ring B.Z."/>
            <person name="Ringwald M."/>
            <person name="Rost B."/>
            <person name="Ruan Y."/>
            <person name="Salzberg S.L."/>
            <person name="Sandelin A."/>
            <person name="Schneider C."/>
            <person name="Schoenbach C."/>
            <person name="Sekiguchi K."/>
            <person name="Semple C.A."/>
            <person name="Seno S."/>
            <person name="Sessa L."/>
            <person name="Sheng Y."/>
            <person name="Shibata Y."/>
            <person name="Shimada H."/>
            <person name="Shimada K."/>
            <person name="Silva D."/>
            <person name="Sinclair B."/>
            <person name="Sperling S."/>
            <person name="Stupka E."/>
            <person name="Sugiura K."/>
            <person name="Sultana R."/>
            <person name="Takenaka Y."/>
            <person name="Taki K."/>
            <person name="Tammoja K."/>
            <person name="Tan S.L."/>
            <person name="Tang S."/>
            <person name="Taylor M.S."/>
            <person name="Tegner J."/>
            <person name="Teichmann S.A."/>
            <person name="Ueda H.R."/>
            <person name="van Nimwegen E."/>
            <person name="Verardo R."/>
            <person name="Wei C.L."/>
            <person name="Yagi K."/>
            <person name="Yamanishi H."/>
            <person name="Zabarovsky E."/>
            <person name="Zhu S."/>
            <person name="Zimmer A."/>
            <person name="Hide W."/>
            <person name="Bult C."/>
            <person name="Grimmond S.M."/>
            <person name="Teasdale R.D."/>
            <person name="Liu E.T."/>
            <person name="Brusic V."/>
            <person name="Quackenbush J."/>
            <person name="Wahlestedt C."/>
            <person name="Mattick J.S."/>
            <person name="Hume D.A."/>
            <person name="Kai C."/>
            <person name="Sasaki D."/>
            <person name="Tomaru Y."/>
            <person name="Fukuda S."/>
            <person name="Kanamori-Katayama M."/>
            <person name="Suzuki M."/>
            <person name="Aoki J."/>
            <person name="Arakawa T."/>
            <person name="Iida J."/>
            <person name="Imamura K."/>
            <person name="Itoh M."/>
            <person name="Kato T."/>
            <person name="Kawaji H."/>
            <person name="Kawagashira N."/>
            <person name="Kawashima T."/>
            <person name="Kojima M."/>
            <person name="Kondo S."/>
            <person name="Konno H."/>
            <person name="Nakano K."/>
            <person name="Ninomiya N."/>
            <person name="Nishio T."/>
            <person name="Okada M."/>
            <person name="Plessy C."/>
            <person name="Shibata K."/>
            <person name="Shiraki T."/>
            <person name="Suzuki S."/>
            <person name="Tagami M."/>
            <person name="Waki K."/>
            <person name="Watahiki A."/>
            <person name="Okamura-Oho Y."/>
            <person name="Suzuki H."/>
            <person name="Kawai J."/>
            <person name="Hayashizaki Y."/>
        </authorList>
    </citation>
    <scope>NUCLEOTIDE SEQUENCE [LARGE SCALE MRNA] (ISOFORMS 1 AND 2)</scope>
    <source>
        <strain>BALB/cJ</strain>
        <strain>C57BL/6J</strain>
        <strain>NOD</strain>
        <tissue>Bone marrow</tissue>
        <tissue>Liver</tissue>
        <tissue>Thymus</tissue>
    </source>
</reference>
<reference key="2">
    <citation type="journal article" date="2004" name="Genome Res.">
        <title>The status, quality, and expansion of the NIH full-length cDNA project: the Mammalian Gene Collection (MGC).</title>
        <authorList>
            <consortium name="The MGC Project Team"/>
        </authorList>
    </citation>
    <scope>NUCLEOTIDE SEQUENCE [LARGE SCALE MRNA] (ISOFORM 1)</scope>
    <source>
        <strain>FVB/N</strain>
        <tissue>Mammary tumor</tissue>
    </source>
</reference>
<reference key="3">
    <citation type="journal article" date="2010" name="Cell">
        <title>A tissue-specific atlas of mouse protein phosphorylation and expression.</title>
        <authorList>
            <person name="Huttlin E.L."/>
            <person name="Jedrychowski M.P."/>
            <person name="Elias J.E."/>
            <person name="Goswami T."/>
            <person name="Rad R."/>
            <person name="Beausoleil S.A."/>
            <person name="Villen J."/>
            <person name="Haas W."/>
            <person name="Sowa M.E."/>
            <person name="Gygi S.P."/>
        </authorList>
    </citation>
    <scope>IDENTIFICATION BY MASS SPECTROMETRY [LARGE SCALE ANALYSIS]</scope>
    <source>
        <tissue>Brown adipose tissue</tissue>
        <tissue>Kidney</tissue>
        <tissue>Spleen</tissue>
        <tissue>Testis</tissue>
    </source>
</reference>
<dbReference type="EC" id="3.6.4.13"/>
<dbReference type="EMBL" id="AK088894">
    <property type="protein sequence ID" value="BAC40637.1"/>
    <property type="molecule type" value="mRNA"/>
</dbReference>
<dbReference type="EMBL" id="AK145927">
    <property type="protein sequence ID" value="BAE26758.1"/>
    <property type="molecule type" value="mRNA"/>
</dbReference>
<dbReference type="EMBL" id="AK146294">
    <property type="protein sequence ID" value="BAE27051.1"/>
    <property type="molecule type" value="mRNA"/>
</dbReference>
<dbReference type="EMBL" id="AK150997">
    <property type="protein sequence ID" value="BAE30021.1"/>
    <property type="molecule type" value="mRNA"/>
</dbReference>
<dbReference type="EMBL" id="AK162752">
    <property type="protein sequence ID" value="BAE37049.1"/>
    <property type="molecule type" value="mRNA"/>
</dbReference>
<dbReference type="EMBL" id="AK168079">
    <property type="protein sequence ID" value="BAE40052.1"/>
    <property type="molecule type" value="mRNA"/>
</dbReference>
<dbReference type="EMBL" id="BC020134">
    <property type="protein sequence ID" value="AAH20134.1"/>
    <property type="molecule type" value="mRNA"/>
</dbReference>
<dbReference type="CCDS" id="CCDS22460.1">
    <molecule id="Q8VDW0-1"/>
</dbReference>
<dbReference type="RefSeq" id="NP_001350045.1">
    <molecule id="Q8VDW0-1"/>
    <property type="nucleotide sequence ID" value="NM_001363116.1"/>
</dbReference>
<dbReference type="RefSeq" id="NP_932099.2">
    <molecule id="Q8VDW0-1"/>
    <property type="nucleotide sequence ID" value="NM_197982.3"/>
</dbReference>
<dbReference type="RefSeq" id="XP_006531395.1">
    <property type="nucleotide sequence ID" value="XM_006531332.3"/>
</dbReference>
<dbReference type="SMR" id="Q8VDW0"/>
<dbReference type="BioGRID" id="212781">
    <property type="interactions" value="19"/>
</dbReference>
<dbReference type="FunCoup" id="Q8VDW0">
    <property type="interactions" value="4510"/>
</dbReference>
<dbReference type="STRING" id="10090.ENSMUSP00000132222"/>
<dbReference type="GlyGen" id="Q8VDW0">
    <property type="glycosylation" value="1 site"/>
</dbReference>
<dbReference type="iPTMnet" id="Q8VDW0"/>
<dbReference type="PhosphoSitePlus" id="Q8VDW0"/>
<dbReference type="SwissPalm" id="Q8VDW0"/>
<dbReference type="jPOST" id="Q8VDW0"/>
<dbReference type="PaxDb" id="10090-ENSMUSP00000019576"/>
<dbReference type="PeptideAtlas" id="Q8VDW0"/>
<dbReference type="ProteomicsDB" id="275415">
    <molecule id="Q8VDW0-1"/>
</dbReference>
<dbReference type="ProteomicsDB" id="275416">
    <molecule id="Q8VDW0-2"/>
</dbReference>
<dbReference type="Pumba" id="Q8VDW0"/>
<dbReference type="TopDownProteomics" id="Q8VDW0-1">
    <molecule id="Q8VDW0-1"/>
</dbReference>
<dbReference type="Antibodypedia" id="13684">
    <property type="antibodies" value="136 antibodies from 26 providers"/>
</dbReference>
<dbReference type="DNASU" id="68278"/>
<dbReference type="Ensembl" id="ENSMUST00000019576.15">
    <molecule id="Q8VDW0-1"/>
    <property type="protein sequence ID" value="ENSMUSP00000019576.9"/>
    <property type="gene ID" value="ENSMUSG00000005481.19"/>
</dbReference>
<dbReference type="Ensembl" id="ENSMUST00000109810.2">
    <molecule id="Q8VDW0-1"/>
    <property type="protein sequence ID" value="ENSMUSP00000105435.2"/>
    <property type="gene ID" value="ENSMUSG00000005481.19"/>
</dbReference>
<dbReference type="Ensembl" id="ENSMUST00000172396.8">
    <molecule id="Q8VDW0-1"/>
    <property type="protein sequence ID" value="ENSMUSP00000132222.2"/>
    <property type="gene ID" value="ENSMUSG00000005481.19"/>
</dbReference>
<dbReference type="Ensembl" id="ENSMUST00000212949.2">
    <molecule id="Q8VDW0-1"/>
    <property type="protein sequence ID" value="ENSMUSP00000148329.2"/>
    <property type="gene ID" value="ENSMUSG00000005481.19"/>
</dbReference>
<dbReference type="GeneID" id="68278"/>
<dbReference type="KEGG" id="mmu:68278"/>
<dbReference type="UCSC" id="uc009mla.2">
    <molecule id="Q8VDW0-1"/>
    <property type="organism name" value="mouse"/>
</dbReference>
<dbReference type="AGR" id="MGI:1915528"/>
<dbReference type="CTD" id="10212"/>
<dbReference type="MGI" id="MGI:1915528">
    <property type="gene designation" value="Ddx39a"/>
</dbReference>
<dbReference type="VEuPathDB" id="HostDB:ENSMUSG00000005481"/>
<dbReference type="eggNOG" id="KOG0329">
    <property type="taxonomic scope" value="Eukaryota"/>
</dbReference>
<dbReference type="GeneTree" id="ENSGT00940000154912"/>
<dbReference type="HOGENOM" id="CLU_003041_1_0_1"/>
<dbReference type="InParanoid" id="Q8VDW0"/>
<dbReference type="OMA" id="RSKNWQQ"/>
<dbReference type="OrthoDB" id="196131at2759"/>
<dbReference type="PhylomeDB" id="Q8VDW0"/>
<dbReference type="TreeFam" id="TF300442"/>
<dbReference type="Reactome" id="R-MMU-159236">
    <property type="pathway name" value="Transport of Mature mRNA derived from an Intron-Containing Transcript"/>
</dbReference>
<dbReference type="Reactome" id="R-MMU-72187">
    <property type="pathway name" value="mRNA 3'-end processing"/>
</dbReference>
<dbReference type="Reactome" id="R-MMU-73856">
    <property type="pathway name" value="RNA Polymerase II Transcription Termination"/>
</dbReference>
<dbReference type="BioGRID-ORCS" id="68278">
    <property type="hits" value="5 hits in 82 CRISPR screens"/>
</dbReference>
<dbReference type="ChiTaRS" id="Ddx39">
    <property type="organism name" value="mouse"/>
</dbReference>
<dbReference type="PRO" id="PR:Q8VDW0"/>
<dbReference type="Proteomes" id="UP000000589">
    <property type="component" value="Chromosome 8"/>
</dbReference>
<dbReference type="RNAct" id="Q8VDW0">
    <property type="molecule type" value="protein"/>
</dbReference>
<dbReference type="Bgee" id="ENSMUSG00000005481">
    <property type="expression patterns" value="Expressed in cleaving embryo and 260 other cell types or tissues"/>
</dbReference>
<dbReference type="ExpressionAtlas" id="Q8VDW0">
    <property type="expression patterns" value="baseline and differential"/>
</dbReference>
<dbReference type="GO" id="GO:0005737">
    <property type="term" value="C:cytoplasm"/>
    <property type="evidence" value="ECO:0007669"/>
    <property type="project" value="UniProtKB-SubCell"/>
</dbReference>
<dbReference type="GO" id="GO:0016607">
    <property type="term" value="C:nuclear speck"/>
    <property type="evidence" value="ECO:0007669"/>
    <property type="project" value="Ensembl"/>
</dbReference>
<dbReference type="GO" id="GO:0005524">
    <property type="term" value="F:ATP binding"/>
    <property type="evidence" value="ECO:0007669"/>
    <property type="project" value="UniProtKB-KW"/>
</dbReference>
<dbReference type="GO" id="GO:0016887">
    <property type="term" value="F:ATP hydrolysis activity"/>
    <property type="evidence" value="ECO:0007669"/>
    <property type="project" value="RHEA"/>
</dbReference>
<dbReference type="GO" id="GO:0042802">
    <property type="term" value="F:identical protein binding"/>
    <property type="evidence" value="ECO:0007669"/>
    <property type="project" value="Ensembl"/>
</dbReference>
<dbReference type="GO" id="GO:0003723">
    <property type="term" value="F:RNA binding"/>
    <property type="evidence" value="ECO:0007669"/>
    <property type="project" value="Ensembl"/>
</dbReference>
<dbReference type="GO" id="GO:0003724">
    <property type="term" value="F:RNA helicase activity"/>
    <property type="evidence" value="ECO:0007669"/>
    <property type="project" value="UniProtKB-EC"/>
</dbReference>
<dbReference type="GO" id="GO:0006406">
    <property type="term" value="P:mRNA export from nucleus"/>
    <property type="evidence" value="ECO:0007669"/>
    <property type="project" value="Ensembl"/>
</dbReference>
<dbReference type="GO" id="GO:0000398">
    <property type="term" value="P:mRNA splicing, via spliceosome"/>
    <property type="evidence" value="ECO:0007669"/>
    <property type="project" value="Ensembl"/>
</dbReference>
<dbReference type="GO" id="GO:0045824">
    <property type="term" value="P:negative regulation of innate immune response"/>
    <property type="evidence" value="ECO:0007669"/>
    <property type="project" value="Ensembl"/>
</dbReference>
<dbReference type="GO" id="GO:0046832">
    <property type="term" value="P:negative regulation of RNA export from nucleus"/>
    <property type="evidence" value="ECO:0007669"/>
    <property type="project" value="Ensembl"/>
</dbReference>
<dbReference type="CDD" id="cd17950">
    <property type="entry name" value="DEADc_DDX39"/>
    <property type="match status" value="1"/>
</dbReference>
<dbReference type="CDD" id="cd18787">
    <property type="entry name" value="SF2_C_DEAD"/>
    <property type="match status" value="1"/>
</dbReference>
<dbReference type="FunFam" id="3.40.50.300:FF:000111">
    <property type="entry name" value="DEAD-box ATP-dependent RNA helicase"/>
    <property type="match status" value="1"/>
</dbReference>
<dbReference type="FunFam" id="3.40.50.300:FF:000168">
    <property type="entry name" value="DEAD-box ATP-dependent RNA helicase 56-like"/>
    <property type="match status" value="1"/>
</dbReference>
<dbReference type="Gene3D" id="3.40.50.300">
    <property type="entry name" value="P-loop containing nucleotide triphosphate hydrolases"/>
    <property type="match status" value="2"/>
</dbReference>
<dbReference type="InterPro" id="IPR011545">
    <property type="entry name" value="DEAD/DEAH_box_helicase_dom"/>
</dbReference>
<dbReference type="InterPro" id="IPR014001">
    <property type="entry name" value="Helicase_ATP-bd"/>
</dbReference>
<dbReference type="InterPro" id="IPR001650">
    <property type="entry name" value="Helicase_C-like"/>
</dbReference>
<dbReference type="InterPro" id="IPR027417">
    <property type="entry name" value="P-loop_NTPase"/>
</dbReference>
<dbReference type="InterPro" id="IPR014014">
    <property type="entry name" value="RNA_helicase_DEAD_Q_motif"/>
</dbReference>
<dbReference type="PANTHER" id="PTHR47958">
    <property type="entry name" value="ATP-DEPENDENT RNA HELICASE DBP3"/>
    <property type="match status" value="1"/>
</dbReference>
<dbReference type="Pfam" id="PF00270">
    <property type="entry name" value="DEAD"/>
    <property type="match status" value="1"/>
</dbReference>
<dbReference type="Pfam" id="PF00271">
    <property type="entry name" value="Helicase_C"/>
    <property type="match status" value="1"/>
</dbReference>
<dbReference type="SMART" id="SM00487">
    <property type="entry name" value="DEXDc"/>
    <property type="match status" value="1"/>
</dbReference>
<dbReference type="SMART" id="SM00490">
    <property type="entry name" value="HELICc"/>
    <property type="match status" value="1"/>
</dbReference>
<dbReference type="SUPFAM" id="SSF52540">
    <property type="entry name" value="P-loop containing nucleoside triphosphate hydrolases"/>
    <property type="match status" value="1"/>
</dbReference>
<dbReference type="PROSITE" id="PS51192">
    <property type="entry name" value="HELICASE_ATP_BIND_1"/>
    <property type="match status" value="1"/>
</dbReference>
<dbReference type="PROSITE" id="PS51194">
    <property type="entry name" value="HELICASE_CTER"/>
    <property type="match status" value="1"/>
</dbReference>
<dbReference type="PROSITE" id="PS51195">
    <property type="entry name" value="Q_MOTIF"/>
    <property type="match status" value="1"/>
</dbReference>
<feature type="initiator methionine" description="Removed" evidence="1">
    <location>
        <position position="1"/>
    </location>
</feature>
<feature type="chain" id="PRO_0000055068" description="ATP-dependent RNA helicase DDX39A">
    <location>
        <begin position="2"/>
        <end position="427"/>
    </location>
</feature>
<feature type="domain" description="Helicase ATP-binding" evidence="2">
    <location>
        <begin position="75"/>
        <end position="248"/>
    </location>
</feature>
<feature type="domain" description="Helicase C-terminal" evidence="3">
    <location>
        <begin position="260"/>
        <end position="421"/>
    </location>
</feature>
<feature type="region of interest" description="Disordered" evidence="4">
    <location>
        <begin position="1"/>
        <end position="36"/>
    </location>
</feature>
<feature type="short sequence motif" description="Q motif">
    <location>
        <begin position="44"/>
        <end position="72"/>
    </location>
</feature>
<feature type="short sequence motif" description="DECD box">
    <location>
        <begin position="195"/>
        <end position="198"/>
    </location>
</feature>
<feature type="compositionally biased region" description="Acidic residues" evidence="4">
    <location>
        <begin position="1"/>
        <end position="19"/>
    </location>
</feature>
<feature type="binding site" evidence="2">
    <location>
        <begin position="88"/>
        <end position="95"/>
    </location>
    <ligand>
        <name>ATP</name>
        <dbReference type="ChEBI" id="CHEBI:30616"/>
    </ligand>
</feature>
<feature type="modified residue" description="N-acetylalanine" evidence="1">
    <location>
        <position position="2"/>
    </location>
</feature>
<feature type="modified residue" description="N6-acetyllysine; alternate" evidence="1">
    <location>
        <position position="35"/>
    </location>
</feature>
<feature type="modified residue" description="Phosphoserine" evidence="1">
    <location>
        <position position="37"/>
    </location>
</feature>
<feature type="modified residue" description="Phosphothreonine" evidence="1">
    <location>
        <position position="171"/>
    </location>
</feature>
<feature type="modified residue" description="Phosphoserine" evidence="1">
    <location>
        <position position="426"/>
    </location>
</feature>
<feature type="cross-link" description="Glycyl lysine isopeptide (Lys-Gly) (interchain with G-Cter in SUMO2)" evidence="1">
    <location>
        <position position="31"/>
    </location>
</feature>
<feature type="cross-link" description="Glycyl lysine isopeptide (Lys-Gly) (interchain with G-Cter in SUMO2); alternate" evidence="1">
    <location>
        <position position="35"/>
    </location>
</feature>
<feature type="cross-link" description="Glycyl lysine isopeptide (Lys-Gly) (interchain with G-Cter in SUMO2)" evidence="1">
    <location>
        <position position="154"/>
    </location>
</feature>
<feature type="cross-link" description="Glycyl lysine isopeptide (Lys-Gly) (interchain with G-Cter in SUMO2)" evidence="1">
    <location>
        <position position="162"/>
    </location>
</feature>
<feature type="cross-link" description="Glycyl lysine isopeptide (Lys-Gly) (interchain with G-Cter in SUMO2)" evidence="1">
    <location>
        <position position="240"/>
    </location>
</feature>
<feature type="cross-link" description="Glycyl lysine isopeptide (Lys-Gly) (interchain with G-Cter in SUMO2)" evidence="1">
    <location>
        <position position="255"/>
    </location>
</feature>
<feature type="splice variant" id="VSP_013064" description="In isoform 2." evidence="5">
    <location>
        <begin position="1"/>
        <end position="245"/>
    </location>
</feature>
<name>DX39A_MOUSE</name>